<evidence type="ECO:0000255" key="1">
    <source>
        <dbReference type="HAMAP-Rule" id="MF_00160"/>
    </source>
</evidence>
<evidence type="ECO:0000305" key="2"/>
<organism>
    <name type="scientific">Stutzerimonas stutzeri</name>
    <name type="common">Pseudomonas stutzeri</name>
    <dbReference type="NCBI Taxonomy" id="316"/>
    <lineage>
        <taxon>Bacteria</taxon>
        <taxon>Pseudomonadati</taxon>
        <taxon>Pseudomonadota</taxon>
        <taxon>Gammaproteobacteria</taxon>
        <taxon>Pseudomonadales</taxon>
        <taxon>Pseudomonadaceae</taxon>
        <taxon>Stutzerimonas</taxon>
    </lineage>
</organism>
<protein>
    <recommendedName>
        <fullName evidence="1">Phosphoserine aminotransferase</fullName>
        <ecNumber evidence="1">2.6.1.52</ecNumber>
    </recommendedName>
    <alternativeName>
        <fullName evidence="1">Phosphohydroxythreonine aminotransferase</fullName>
        <shortName evidence="1">PSAT</shortName>
    </alternativeName>
</protein>
<feature type="chain" id="PRO_0000150201" description="Phosphoserine aminotransferase">
    <location>
        <begin position="1"/>
        <end position="361"/>
    </location>
</feature>
<feature type="binding site" evidence="1">
    <location>
        <position position="43"/>
    </location>
    <ligand>
        <name>L-glutamate</name>
        <dbReference type="ChEBI" id="CHEBI:29985"/>
    </ligand>
</feature>
<feature type="binding site" evidence="1">
    <location>
        <begin position="77"/>
        <end position="78"/>
    </location>
    <ligand>
        <name>pyridoxal 5'-phosphate</name>
        <dbReference type="ChEBI" id="CHEBI:597326"/>
    </ligand>
</feature>
<feature type="binding site" evidence="1">
    <location>
        <position position="103"/>
    </location>
    <ligand>
        <name>pyridoxal 5'-phosphate</name>
        <dbReference type="ChEBI" id="CHEBI:597326"/>
    </ligand>
</feature>
<feature type="binding site" evidence="1">
    <location>
        <position position="153"/>
    </location>
    <ligand>
        <name>pyridoxal 5'-phosphate</name>
        <dbReference type="ChEBI" id="CHEBI:597326"/>
    </ligand>
</feature>
<feature type="binding site" evidence="1">
    <location>
        <position position="173"/>
    </location>
    <ligand>
        <name>pyridoxal 5'-phosphate</name>
        <dbReference type="ChEBI" id="CHEBI:597326"/>
    </ligand>
</feature>
<feature type="binding site" evidence="1">
    <location>
        <position position="196"/>
    </location>
    <ligand>
        <name>pyridoxal 5'-phosphate</name>
        <dbReference type="ChEBI" id="CHEBI:597326"/>
    </ligand>
</feature>
<feature type="binding site" evidence="1">
    <location>
        <begin position="238"/>
        <end position="239"/>
    </location>
    <ligand>
        <name>pyridoxal 5'-phosphate</name>
        <dbReference type="ChEBI" id="CHEBI:597326"/>
    </ligand>
</feature>
<feature type="modified residue" description="N6-(pyridoxal phosphate)lysine" evidence="1">
    <location>
        <position position="197"/>
    </location>
</feature>
<proteinExistence type="inferred from homology"/>
<dbReference type="EC" id="2.6.1.52" evidence="1"/>
<dbReference type="EMBL" id="AF038578">
    <property type="protein sequence ID" value="AAD47359.1"/>
    <property type="status" value="ALT_INIT"/>
    <property type="molecule type" value="Genomic_DNA"/>
</dbReference>
<dbReference type="SMR" id="Q9RI02"/>
<dbReference type="eggNOG" id="COG1932">
    <property type="taxonomic scope" value="Bacteria"/>
</dbReference>
<dbReference type="UniPathway" id="UPA00135">
    <property type="reaction ID" value="UER00197"/>
</dbReference>
<dbReference type="UniPathway" id="UPA00244">
    <property type="reaction ID" value="UER00311"/>
</dbReference>
<dbReference type="GO" id="GO:0005737">
    <property type="term" value="C:cytoplasm"/>
    <property type="evidence" value="ECO:0007669"/>
    <property type="project" value="UniProtKB-SubCell"/>
</dbReference>
<dbReference type="GO" id="GO:0004648">
    <property type="term" value="F:O-phospho-L-serine:2-oxoglutarate aminotransferase activity"/>
    <property type="evidence" value="ECO:0007669"/>
    <property type="project" value="UniProtKB-UniRule"/>
</dbReference>
<dbReference type="GO" id="GO:0030170">
    <property type="term" value="F:pyridoxal phosphate binding"/>
    <property type="evidence" value="ECO:0007669"/>
    <property type="project" value="UniProtKB-UniRule"/>
</dbReference>
<dbReference type="GO" id="GO:0006564">
    <property type="term" value="P:L-serine biosynthetic process"/>
    <property type="evidence" value="ECO:0007669"/>
    <property type="project" value="UniProtKB-UniRule"/>
</dbReference>
<dbReference type="GO" id="GO:0008615">
    <property type="term" value="P:pyridoxine biosynthetic process"/>
    <property type="evidence" value="ECO:0007669"/>
    <property type="project" value="UniProtKB-UniRule"/>
</dbReference>
<dbReference type="CDD" id="cd00611">
    <property type="entry name" value="PSAT_like"/>
    <property type="match status" value="1"/>
</dbReference>
<dbReference type="FunFam" id="3.40.640.10:FF:000010">
    <property type="entry name" value="Phosphoserine aminotransferase"/>
    <property type="match status" value="1"/>
</dbReference>
<dbReference type="FunFam" id="3.90.1150.10:FF:000006">
    <property type="entry name" value="Phosphoserine aminotransferase"/>
    <property type="match status" value="1"/>
</dbReference>
<dbReference type="Gene3D" id="3.90.1150.10">
    <property type="entry name" value="Aspartate Aminotransferase, domain 1"/>
    <property type="match status" value="1"/>
</dbReference>
<dbReference type="Gene3D" id="3.40.640.10">
    <property type="entry name" value="Type I PLP-dependent aspartate aminotransferase-like (Major domain)"/>
    <property type="match status" value="1"/>
</dbReference>
<dbReference type="HAMAP" id="MF_00160">
    <property type="entry name" value="SerC_aminotrans_5"/>
    <property type="match status" value="1"/>
</dbReference>
<dbReference type="InterPro" id="IPR000192">
    <property type="entry name" value="Aminotrans_V_dom"/>
</dbReference>
<dbReference type="InterPro" id="IPR022278">
    <property type="entry name" value="Pser_aminoTfrase"/>
</dbReference>
<dbReference type="InterPro" id="IPR015424">
    <property type="entry name" value="PyrdxlP-dep_Trfase"/>
</dbReference>
<dbReference type="InterPro" id="IPR015421">
    <property type="entry name" value="PyrdxlP-dep_Trfase_major"/>
</dbReference>
<dbReference type="InterPro" id="IPR015422">
    <property type="entry name" value="PyrdxlP-dep_Trfase_small"/>
</dbReference>
<dbReference type="NCBIfam" id="NF003764">
    <property type="entry name" value="PRK05355.1"/>
    <property type="match status" value="1"/>
</dbReference>
<dbReference type="NCBIfam" id="TIGR01364">
    <property type="entry name" value="serC_1"/>
    <property type="match status" value="1"/>
</dbReference>
<dbReference type="PANTHER" id="PTHR43247">
    <property type="entry name" value="PHOSPHOSERINE AMINOTRANSFERASE"/>
    <property type="match status" value="1"/>
</dbReference>
<dbReference type="PANTHER" id="PTHR43247:SF1">
    <property type="entry name" value="PHOSPHOSERINE AMINOTRANSFERASE"/>
    <property type="match status" value="1"/>
</dbReference>
<dbReference type="Pfam" id="PF00266">
    <property type="entry name" value="Aminotran_5"/>
    <property type="match status" value="1"/>
</dbReference>
<dbReference type="PIRSF" id="PIRSF000525">
    <property type="entry name" value="SerC"/>
    <property type="match status" value="1"/>
</dbReference>
<dbReference type="SUPFAM" id="SSF53383">
    <property type="entry name" value="PLP-dependent transferases"/>
    <property type="match status" value="1"/>
</dbReference>
<comment type="function">
    <text evidence="1">Catalyzes the reversible conversion of 3-phosphohydroxypyruvate to phosphoserine and of 3-hydroxy-2-oxo-4-phosphonooxybutanoate to phosphohydroxythreonine.</text>
</comment>
<comment type="catalytic activity">
    <reaction evidence="1">
        <text>O-phospho-L-serine + 2-oxoglutarate = 3-phosphooxypyruvate + L-glutamate</text>
        <dbReference type="Rhea" id="RHEA:14329"/>
        <dbReference type="ChEBI" id="CHEBI:16810"/>
        <dbReference type="ChEBI" id="CHEBI:18110"/>
        <dbReference type="ChEBI" id="CHEBI:29985"/>
        <dbReference type="ChEBI" id="CHEBI:57524"/>
        <dbReference type="EC" id="2.6.1.52"/>
    </reaction>
</comment>
<comment type="catalytic activity">
    <reaction evidence="1">
        <text>4-(phosphooxy)-L-threonine + 2-oxoglutarate = (R)-3-hydroxy-2-oxo-4-phosphooxybutanoate + L-glutamate</text>
        <dbReference type="Rhea" id="RHEA:16573"/>
        <dbReference type="ChEBI" id="CHEBI:16810"/>
        <dbReference type="ChEBI" id="CHEBI:29985"/>
        <dbReference type="ChEBI" id="CHEBI:58452"/>
        <dbReference type="ChEBI" id="CHEBI:58538"/>
        <dbReference type="EC" id="2.6.1.52"/>
    </reaction>
</comment>
<comment type="cofactor">
    <cofactor evidence="1">
        <name>pyridoxal 5'-phosphate</name>
        <dbReference type="ChEBI" id="CHEBI:597326"/>
    </cofactor>
    <text evidence="1">Binds 1 pyridoxal phosphate per subunit.</text>
</comment>
<comment type="pathway">
    <text evidence="1">Amino-acid biosynthesis; L-serine biosynthesis; L-serine from 3-phospho-D-glycerate: step 2/3.</text>
</comment>
<comment type="pathway">
    <text evidence="1">Cofactor biosynthesis; pyridoxine 5'-phosphate biosynthesis; pyridoxine 5'-phosphate from D-erythrose 4-phosphate: step 3/5.</text>
</comment>
<comment type="subunit">
    <text evidence="1">Homodimer.</text>
</comment>
<comment type="subcellular location">
    <subcellularLocation>
        <location evidence="1">Cytoplasm</location>
    </subcellularLocation>
</comment>
<comment type="similarity">
    <text evidence="1">Belongs to the class-V pyridoxal-phosphate-dependent aminotransferase family. SerC subfamily.</text>
</comment>
<comment type="sequence caution" evidence="2">
    <conflict type="erroneous initiation">
        <sequence resource="EMBL-CDS" id="AAD47359"/>
    </conflict>
</comment>
<gene>
    <name evidence="1" type="primary">serC</name>
</gene>
<keyword id="KW-0028">Amino-acid biosynthesis</keyword>
<keyword id="KW-0032">Aminotransferase</keyword>
<keyword id="KW-0963">Cytoplasm</keyword>
<keyword id="KW-0663">Pyridoxal phosphate</keyword>
<keyword id="KW-0664">Pyridoxine biosynthesis</keyword>
<keyword id="KW-0718">Serine biosynthesis</keyword>
<keyword id="KW-0808">Transferase</keyword>
<accession>Q9RI02</accession>
<name>SERC_STUST</name>
<sequence length="361" mass="39710">MSKRAFNFCAGPAALPEAVLQRAQAELLDWQGRGLSVMEMSHRSDAYVAIAEKAEQDLRDLMAIPSDYKVLFLQGGASQQFAEIPLNLLPEGGVADYVDTGIWSRKSIEEARRFGNVNLAASAKPYDYFAISGQNDWQLSDNAAYLHYASNETIGGLQFDWVPELGDTPLVVDMSSDILSRAIDVSKFGLIYAGAQKNIGPSGLVVVIVRDDLLGKARSSCPTMLDYKIAADNGSMYNTPATFSWYLSGLVFEWLKEQGGVEVMEQRNRAKKELLYGFIDASEFYTNPIAENARSWMNVPFRLADERLDKAFLAGADARGLLNLKGHRSVGGMRASIYNAVGLDAVEALVAYMAEFEKEHG</sequence>
<reference key="1">
    <citation type="journal article" date="1999" name="J. Mol. Evol.">
        <title>A probable mixed-function supraoperon in Pseudomonas exhibits gene organization features of both intergenomic conservation and gene shuffling.</title>
        <authorList>
            <person name="Xie G."/>
            <person name="Bonner C.A."/>
            <person name="Jensen R.A."/>
        </authorList>
    </citation>
    <scope>NUCLEOTIDE SEQUENCE [GENOMIC DNA]</scope>
    <source>
        <strain>DSM 10701 / IAM 15110 / JCM 21571 / JM300</strain>
    </source>
</reference>